<organism>
    <name type="scientific">Homo sapiens</name>
    <name type="common">Human</name>
    <dbReference type="NCBI Taxonomy" id="9606"/>
    <lineage>
        <taxon>Eukaryota</taxon>
        <taxon>Metazoa</taxon>
        <taxon>Chordata</taxon>
        <taxon>Craniata</taxon>
        <taxon>Vertebrata</taxon>
        <taxon>Euteleostomi</taxon>
        <taxon>Mammalia</taxon>
        <taxon>Eutheria</taxon>
        <taxon>Euarchontoglires</taxon>
        <taxon>Primates</taxon>
        <taxon>Haplorrhini</taxon>
        <taxon>Catarrhini</taxon>
        <taxon>Hominidae</taxon>
        <taxon>Homo</taxon>
    </lineage>
</organism>
<dbReference type="EMBL" id="AK293617">
    <property type="protein sequence ID" value="BAG57077.1"/>
    <property type="molecule type" value="mRNA"/>
</dbReference>
<dbReference type="EMBL" id="AK293905">
    <property type="protein sequence ID" value="BAG57290.1"/>
    <property type="molecule type" value="mRNA"/>
</dbReference>
<dbReference type="EMBL" id="AC020689">
    <property type="status" value="NOT_ANNOTATED_CDS"/>
    <property type="molecule type" value="Genomic_DNA"/>
</dbReference>
<dbReference type="EMBL" id="AC021534">
    <property type="status" value="NOT_ANNOTATED_CDS"/>
    <property type="molecule type" value="Genomic_DNA"/>
</dbReference>
<dbReference type="EMBL" id="AC027824">
    <property type="status" value="NOT_ANNOTATED_CDS"/>
    <property type="molecule type" value="Genomic_DNA"/>
</dbReference>
<dbReference type="EMBL" id="AC055858">
    <property type="status" value="NOT_ANNOTATED_CDS"/>
    <property type="molecule type" value="Genomic_DNA"/>
</dbReference>
<dbReference type="EMBL" id="AC073624">
    <property type="status" value="NOT_ANNOTATED_CDS"/>
    <property type="molecule type" value="Genomic_DNA"/>
</dbReference>
<dbReference type="EMBL" id="AC142247">
    <property type="status" value="NOT_ANNOTATED_CDS"/>
    <property type="molecule type" value="Genomic_DNA"/>
</dbReference>
<dbReference type="CCDS" id="CCDS45805.1">
    <molecule id="A6NFN3-1"/>
</dbReference>
<dbReference type="RefSeq" id="NP_001076044.1">
    <molecule id="A6NFN3-1"/>
    <property type="nucleotide sequence ID" value="NM_001082575.3"/>
</dbReference>
<dbReference type="RefSeq" id="NP_001337382.1">
    <molecule id="A6NFN3-1"/>
    <property type="nucleotide sequence ID" value="NM_001350453.2"/>
</dbReference>
<dbReference type="RefSeq" id="NP_001372757.1">
    <molecule id="A6NFN3-1"/>
    <property type="nucleotide sequence ID" value="NM_001385828.1"/>
</dbReference>
<dbReference type="RefSeq" id="NP_001372758.1">
    <molecule id="A6NFN3-1"/>
    <property type="nucleotide sequence ID" value="NM_001385829.1"/>
</dbReference>
<dbReference type="RefSeq" id="NP_001372759.1">
    <molecule id="A6NFN3-1"/>
    <property type="nucleotide sequence ID" value="NM_001385830.1"/>
</dbReference>
<dbReference type="RefSeq" id="NP_001372760.1">
    <molecule id="A6NFN3-1"/>
    <property type="nucleotide sequence ID" value="NM_001385831.1"/>
</dbReference>
<dbReference type="RefSeq" id="NP_001372761.1">
    <molecule id="A6NFN3-1"/>
    <property type="nucleotide sequence ID" value="NM_001385832.1"/>
</dbReference>
<dbReference type="RefSeq" id="NP_001372762.1">
    <molecule id="A6NFN3-1"/>
    <property type="nucleotide sequence ID" value="NM_001385833.1"/>
</dbReference>
<dbReference type="RefSeq" id="NP_001372763.1">
    <molecule id="A6NFN3-1"/>
    <property type="nucleotide sequence ID" value="NM_001385834.1"/>
</dbReference>
<dbReference type="RefSeq" id="NP_001372764.1">
    <molecule id="A6NFN3-1"/>
    <property type="nucleotide sequence ID" value="NM_001385835.1"/>
</dbReference>
<dbReference type="RefSeq" id="NP_001372765.1">
    <molecule id="A6NFN3-1"/>
    <property type="nucleotide sequence ID" value="NM_001385836.1"/>
</dbReference>
<dbReference type="RefSeq" id="NP_001372766.1">
    <molecule id="A6NFN3-1"/>
    <property type="nucleotide sequence ID" value="NM_001385837.1"/>
</dbReference>
<dbReference type="RefSeq" id="NP_001372767.1">
    <molecule id="A6NFN3-1"/>
    <property type="nucleotide sequence ID" value="NM_001385838.1"/>
</dbReference>
<dbReference type="RefSeq" id="NP_001372768.1">
    <molecule id="A6NFN3-1"/>
    <property type="nucleotide sequence ID" value="NM_001385839.1"/>
</dbReference>
<dbReference type="RefSeq" id="NP_001372769.1">
    <molecule id="A6NFN3-1"/>
    <property type="nucleotide sequence ID" value="NM_001385840.1"/>
</dbReference>
<dbReference type="RefSeq" id="NP_001372770.1">
    <molecule id="A6NFN3-1"/>
    <property type="nucleotide sequence ID" value="NM_001385841.1"/>
</dbReference>
<dbReference type="RefSeq" id="NP_001372771.1">
    <molecule id="A6NFN3-1"/>
    <property type="nucleotide sequence ID" value="NM_001385842.1"/>
</dbReference>
<dbReference type="RefSeq" id="XP_016879699.1">
    <property type="nucleotide sequence ID" value="XM_017024210.1"/>
</dbReference>
<dbReference type="SMR" id="A6NFN3"/>
<dbReference type="BioGRID" id="127004">
    <property type="interactions" value="47"/>
</dbReference>
<dbReference type="FunCoup" id="A6NFN3">
    <property type="interactions" value="1512"/>
</dbReference>
<dbReference type="IntAct" id="A6NFN3">
    <property type="interactions" value="17"/>
</dbReference>
<dbReference type="STRING" id="9606.ENSP00000463653"/>
<dbReference type="GlyGen" id="A6NFN3">
    <property type="glycosylation" value="1 site"/>
</dbReference>
<dbReference type="iPTMnet" id="A6NFN3"/>
<dbReference type="PhosphoSitePlus" id="A6NFN3"/>
<dbReference type="BioMuta" id="RBFOX3"/>
<dbReference type="jPOST" id="A6NFN3"/>
<dbReference type="MassIVE" id="A6NFN3"/>
<dbReference type="PaxDb" id="9606-ENSP00000463653"/>
<dbReference type="PeptideAtlas" id="A6NFN3"/>
<dbReference type="ProteomicsDB" id="1060">
    <molecule id="A6NFN3-1"/>
</dbReference>
<dbReference type="Pumba" id="A6NFN3"/>
<dbReference type="Antibodypedia" id="32645">
    <property type="antibodies" value="517 antibodies from 37 providers"/>
</dbReference>
<dbReference type="DNASU" id="146713"/>
<dbReference type="Ensembl" id="ENST00000580155.5">
    <molecule id="A6NFN3-1"/>
    <property type="protein sequence ID" value="ENSP00000463653.1"/>
    <property type="gene ID" value="ENSG00000167281.20"/>
</dbReference>
<dbReference type="Ensembl" id="ENST00000584778.5">
    <molecule id="A6NFN3-2"/>
    <property type="protein sequence ID" value="ENSP00000462007.1"/>
    <property type="gene ID" value="ENSG00000167281.20"/>
</dbReference>
<dbReference type="GeneID" id="146713"/>
<dbReference type="KEGG" id="hsa:146713"/>
<dbReference type="UCSC" id="uc010dhs.5">
    <molecule id="A6NFN3-1"/>
    <property type="organism name" value="human"/>
</dbReference>
<dbReference type="AGR" id="HGNC:27097"/>
<dbReference type="CTD" id="146713"/>
<dbReference type="DisGeNET" id="146713"/>
<dbReference type="GeneCards" id="RBFOX3"/>
<dbReference type="HGNC" id="HGNC:27097">
    <property type="gene designation" value="RBFOX3"/>
</dbReference>
<dbReference type="HPA" id="ENSG00000167281">
    <property type="expression patterns" value="Tissue enhanced (brain, intestine, urinary bladder)"/>
</dbReference>
<dbReference type="MalaCards" id="RBFOX3"/>
<dbReference type="MIM" id="616999">
    <property type="type" value="gene"/>
</dbReference>
<dbReference type="neXtProt" id="NX_A6NFN3"/>
<dbReference type="OpenTargets" id="ENSG00000167281"/>
<dbReference type="VEuPathDB" id="HostDB:ENSG00000167281"/>
<dbReference type="eggNOG" id="KOG0125">
    <property type="taxonomic scope" value="Eukaryota"/>
</dbReference>
<dbReference type="GeneTree" id="ENSGT00940000159924"/>
<dbReference type="HOGENOM" id="CLU_048440_0_0_1"/>
<dbReference type="InParanoid" id="A6NFN3"/>
<dbReference type="OrthoDB" id="5382468at2759"/>
<dbReference type="PAN-GO" id="A6NFN3">
    <property type="GO annotations" value="5 GO annotations based on evolutionary models"/>
</dbReference>
<dbReference type="PhylomeDB" id="A6NFN3"/>
<dbReference type="TreeFam" id="TF315942"/>
<dbReference type="PathwayCommons" id="A6NFN3"/>
<dbReference type="Reactome" id="R-HSA-9768919">
    <property type="pathway name" value="NPAS4 regulates expression of target genes"/>
</dbReference>
<dbReference type="SignaLink" id="A6NFN3"/>
<dbReference type="SIGNOR" id="A6NFN3"/>
<dbReference type="BioGRID-ORCS" id="146713">
    <property type="hits" value="22 hits in 1146 CRISPR screens"/>
</dbReference>
<dbReference type="CD-CODE" id="DEE660B4">
    <property type="entry name" value="Stress granule"/>
</dbReference>
<dbReference type="ChiTaRS" id="RBFOX3">
    <property type="organism name" value="human"/>
</dbReference>
<dbReference type="GenomeRNAi" id="146713"/>
<dbReference type="Pharos" id="A6NFN3">
    <property type="development level" value="Tbio"/>
</dbReference>
<dbReference type="PRO" id="PR:A6NFN3"/>
<dbReference type="Proteomes" id="UP000005640">
    <property type="component" value="Chromosome 17"/>
</dbReference>
<dbReference type="RNAct" id="A6NFN3">
    <property type="molecule type" value="protein"/>
</dbReference>
<dbReference type="Bgee" id="ENSG00000167281">
    <property type="expression patterns" value="Expressed in right hemisphere of cerebellum and 117 other cell types or tissues"/>
</dbReference>
<dbReference type="ExpressionAtlas" id="A6NFN3">
    <property type="expression patterns" value="baseline and differential"/>
</dbReference>
<dbReference type="GO" id="GO:0005737">
    <property type="term" value="C:cytoplasm"/>
    <property type="evidence" value="ECO:0000318"/>
    <property type="project" value="GO_Central"/>
</dbReference>
<dbReference type="GO" id="GO:0005634">
    <property type="term" value="C:nucleus"/>
    <property type="evidence" value="ECO:0000318"/>
    <property type="project" value="GO_Central"/>
</dbReference>
<dbReference type="GO" id="GO:0003729">
    <property type="term" value="F:mRNA binding"/>
    <property type="evidence" value="ECO:0000318"/>
    <property type="project" value="GO_Central"/>
</dbReference>
<dbReference type="GO" id="GO:0006397">
    <property type="term" value="P:mRNA processing"/>
    <property type="evidence" value="ECO:0007669"/>
    <property type="project" value="UniProtKB-KW"/>
</dbReference>
<dbReference type="GO" id="GO:0007399">
    <property type="term" value="P:nervous system development"/>
    <property type="evidence" value="ECO:0000318"/>
    <property type="project" value="GO_Central"/>
</dbReference>
<dbReference type="GO" id="GO:0000381">
    <property type="term" value="P:regulation of alternative mRNA splicing, via spliceosome"/>
    <property type="evidence" value="ECO:0000318"/>
    <property type="project" value="GO_Central"/>
</dbReference>
<dbReference type="GO" id="GO:0008380">
    <property type="term" value="P:RNA splicing"/>
    <property type="evidence" value="ECO:0007669"/>
    <property type="project" value="UniProtKB-KW"/>
</dbReference>
<dbReference type="CDD" id="cd12407">
    <property type="entry name" value="RRM_FOX1_like"/>
    <property type="match status" value="1"/>
</dbReference>
<dbReference type="FunFam" id="3.30.70.330:FF:000004">
    <property type="entry name" value="RNA binding fox-1 homolog 1"/>
    <property type="match status" value="1"/>
</dbReference>
<dbReference type="Gene3D" id="3.30.70.330">
    <property type="match status" value="1"/>
</dbReference>
<dbReference type="InterPro" id="IPR025670">
    <property type="entry name" value="Fox-1_C_dom"/>
</dbReference>
<dbReference type="InterPro" id="IPR034237">
    <property type="entry name" value="FOX1_RRM"/>
</dbReference>
<dbReference type="InterPro" id="IPR012677">
    <property type="entry name" value="Nucleotide-bd_a/b_plait_sf"/>
</dbReference>
<dbReference type="InterPro" id="IPR035979">
    <property type="entry name" value="RBD_domain_sf"/>
</dbReference>
<dbReference type="InterPro" id="IPR017325">
    <property type="entry name" value="RBFOX1-3"/>
</dbReference>
<dbReference type="InterPro" id="IPR047131">
    <property type="entry name" value="RBFOX1-like"/>
</dbReference>
<dbReference type="InterPro" id="IPR000504">
    <property type="entry name" value="RRM_dom"/>
</dbReference>
<dbReference type="PANTHER" id="PTHR15597">
    <property type="entry name" value="ATAXIN 2-BINDING PROTEIN 1-RELATED"/>
    <property type="match status" value="1"/>
</dbReference>
<dbReference type="PANTHER" id="PTHR15597:SF25">
    <property type="entry name" value="RNA BINDING PROTEIN FOX-1 HOMOLOG 3"/>
    <property type="match status" value="1"/>
</dbReference>
<dbReference type="Pfam" id="PF12414">
    <property type="entry name" value="Fox-1_C"/>
    <property type="match status" value="1"/>
</dbReference>
<dbReference type="Pfam" id="PF00076">
    <property type="entry name" value="RRM_1"/>
    <property type="match status" value="1"/>
</dbReference>
<dbReference type="PIRSF" id="PIRSF037932">
    <property type="entry name" value="Ataxin_2_bd_A2BP"/>
    <property type="match status" value="1"/>
</dbReference>
<dbReference type="SMART" id="SM00360">
    <property type="entry name" value="RRM"/>
    <property type="match status" value="1"/>
</dbReference>
<dbReference type="SUPFAM" id="SSF54928">
    <property type="entry name" value="RNA-binding domain, RBD"/>
    <property type="match status" value="1"/>
</dbReference>
<dbReference type="PROSITE" id="PS50102">
    <property type="entry name" value="RRM"/>
    <property type="match status" value="1"/>
</dbReference>
<protein>
    <recommendedName>
        <fullName>RNA binding protein fox-1 homolog 3</fullName>
    </recommendedName>
    <alternativeName>
        <fullName>Fox-1 homolog C</fullName>
    </alternativeName>
    <alternativeName>
        <fullName>Neuronal nuclei antigen</fullName>
        <shortName>NeuN antigen</shortName>
    </alternativeName>
</protein>
<keyword id="KW-0025">Alternative splicing</keyword>
<keyword id="KW-0963">Cytoplasm</keyword>
<keyword id="KW-0488">Methylation</keyword>
<keyword id="KW-0507">mRNA processing</keyword>
<keyword id="KW-0508">mRNA splicing</keyword>
<keyword id="KW-0539">Nucleus</keyword>
<keyword id="KW-1267">Proteomics identification</keyword>
<keyword id="KW-1185">Reference proteome</keyword>
<keyword id="KW-0694">RNA-binding</keyword>
<gene>
    <name type="primary">RBFOX3</name>
</gene>
<name>RFOX3_HUMAN</name>
<sequence>MAQPYPPAQYPPPPQNGIPAEYAPPPPHPTQDYSGQTPVPTEHGMTLYTPAQTHPEQPGSEASTQPIAGTQTVPQTDEAAQTDSQPLHPSDPTEKQQPKRLHVSNIPFRFRDPDLRQMFGQFGKILDVEIIFNERGSKGFGFVTFETSSDADRAREKLNGTIVEGRKIEVNNATARVMTNKKTGNPYTNGWKLNPVVGAVYGPEFYAVTGFPYPTTGTAVAYRGAHLRGRGRAVYNTFRAAPPPPPIPTYGAVVYQDGFYGAEIYGGYAAYRYAQPAAAAAAYSDSYGRVYAAADPYHHTIGPAATYSIGTM</sequence>
<feature type="chain" id="PRO_0000349207" description="RNA binding protein fox-1 homolog 3">
    <location>
        <begin position="1"/>
        <end position="312"/>
    </location>
</feature>
<feature type="domain" description="RRM" evidence="3">
    <location>
        <begin position="100"/>
        <end position="175"/>
    </location>
</feature>
<feature type="region of interest" description="Disordered" evidence="4">
    <location>
        <begin position="1"/>
        <end position="104"/>
    </location>
</feature>
<feature type="compositionally biased region" description="Pro residues" evidence="4">
    <location>
        <begin position="1"/>
        <end position="29"/>
    </location>
</feature>
<feature type="compositionally biased region" description="Polar residues" evidence="4">
    <location>
        <begin position="49"/>
        <end position="87"/>
    </location>
</feature>
<feature type="site" description="Interaction with RNA" evidence="1">
    <location>
        <position position="100"/>
    </location>
</feature>
<feature type="site" description="Interaction with RNA" evidence="1">
    <location>
        <position position="108"/>
    </location>
</feature>
<feature type="site" description="Interaction with RNA" evidence="1">
    <location>
        <position position="109"/>
    </location>
</feature>
<feature type="site" description="Interaction with RNA" evidence="1">
    <location>
        <position position="133"/>
    </location>
</feature>
<feature type="site" description="Interaction with RNA" evidence="1">
    <location>
        <position position="138"/>
    </location>
</feature>
<feature type="site" description="Interaction with RNA" evidence="1">
    <location>
        <position position="142"/>
    </location>
</feature>
<feature type="site" description="Interaction with RNA" evidence="1">
    <location>
        <position position="166"/>
    </location>
</feature>
<feature type="site" description="Interaction with RNA" evidence="1">
    <location>
        <position position="176"/>
    </location>
</feature>
<feature type="modified residue" description="Asymmetric dimethylarginine; alternate" evidence="2">
    <location>
        <position position="223"/>
    </location>
</feature>
<feature type="modified residue" description="Omega-N-methylarginine; alternate" evidence="2">
    <location>
        <position position="223"/>
    </location>
</feature>
<feature type="modified residue" description="Asymmetric dimethylarginine" evidence="2">
    <location>
        <position position="272"/>
    </location>
</feature>
<feature type="splice variant" id="VSP_056241" description="In isoform 2." evidence="6">
    <original>M</original>
    <variation>MVRSPGPPSPGCQS</variation>
    <location>
        <position position="312"/>
    </location>
</feature>
<accession>A6NFN3</accession>
<accession>B4DEG6</accession>
<accession>B4DF29</accession>
<proteinExistence type="evidence at protein level"/>
<evidence type="ECO:0000250" key="1"/>
<evidence type="ECO:0000250" key="2">
    <source>
        <dbReference type="UniProtKB" id="Q8BIF2"/>
    </source>
</evidence>
<evidence type="ECO:0000255" key="3">
    <source>
        <dbReference type="PROSITE-ProRule" id="PRU00176"/>
    </source>
</evidence>
<evidence type="ECO:0000256" key="4">
    <source>
        <dbReference type="SAM" id="MobiDB-lite"/>
    </source>
</evidence>
<evidence type="ECO:0000269" key="5">
    <source>
    </source>
</evidence>
<evidence type="ECO:0000303" key="6">
    <source>
    </source>
</evidence>
<comment type="function">
    <text evidence="2">Pre-mRNA alternative splicing regulator. Regulates alternative splicing of RBFOX2 to enhance the production of mRNA species that are targeted for nonsense-mediated decay (NMD).</text>
</comment>
<comment type="subcellular location">
    <subcellularLocation>
        <location evidence="5">Nucleus</location>
    </subcellularLocation>
    <subcellularLocation>
        <location evidence="5">Cytoplasm</location>
    </subcellularLocation>
    <text evidence="5">Largely restricted to neuronal nuclei. However, significant cytoplasmic localization in neurons from brains from HIV-infected individuals with cognitive impairment.</text>
</comment>
<comment type="alternative products">
    <event type="alternative splicing"/>
    <isoform>
        <id>A6NFN3-1</id>
        <name>1</name>
        <sequence type="displayed"/>
    </isoform>
    <isoform>
        <id>A6NFN3-2</id>
        <name>2</name>
        <sequence type="described" ref="VSP_056241"/>
    </isoform>
</comment>
<reference key="1">
    <citation type="journal article" date="2004" name="Nat. Genet.">
        <title>Complete sequencing and characterization of 21,243 full-length human cDNAs.</title>
        <authorList>
            <person name="Ota T."/>
            <person name="Suzuki Y."/>
            <person name="Nishikawa T."/>
            <person name="Otsuki T."/>
            <person name="Sugiyama T."/>
            <person name="Irie R."/>
            <person name="Wakamatsu A."/>
            <person name="Hayashi K."/>
            <person name="Sato H."/>
            <person name="Nagai K."/>
            <person name="Kimura K."/>
            <person name="Makita H."/>
            <person name="Sekine M."/>
            <person name="Obayashi M."/>
            <person name="Nishi T."/>
            <person name="Shibahara T."/>
            <person name="Tanaka T."/>
            <person name="Ishii S."/>
            <person name="Yamamoto J."/>
            <person name="Saito K."/>
            <person name="Kawai Y."/>
            <person name="Isono Y."/>
            <person name="Nakamura Y."/>
            <person name="Nagahari K."/>
            <person name="Murakami K."/>
            <person name="Yasuda T."/>
            <person name="Iwayanagi T."/>
            <person name="Wagatsuma M."/>
            <person name="Shiratori A."/>
            <person name="Sudo H."/>
            <person name="Hosoiri T."/>
            <person name="Kaku Y."/>
            <person name="Kodaira H."/>
            <person name="Kondo H."/>
            <person name="Sugawara M."/>
            <person name="Takahashi M."/>
            <person name="Kanda K."/>
            <person name="Yokoi T."/>
            <person name="Furuya T."/>
            <person name="Kikkawa E."/>
            <person name="Omura Y."/>
            <person name="Abe K."/>
            <person name="Kamihara K."/>
            <person name="Katsuta N."/>
            <person name="Sato K."/>
            <person name="Tanikawa M."/>
            <person name="Yamazaki M."/>
            <person name="Ninomiya K."/>
            <person name="Ishibashi T."/>
            <person name="Yamashita H."/>
            <person name="Murakawa K."/>
            <person name="Fujimori K."/>
            <person name="Tanai H."/>
            <person name="Kimata M."/>
            <person name="Watanabe M."/>
            <person name="Hiraoka S."/>
            <person name="Chiba Y."/>
            <person name="Ishida S."/>
            <person name="Ono Y."/>
            <person name="Takiguchi S."/>
            <person name="Watanabe S."/>
            <person name="Yosida M."/>
            <person name="Hotuta T."/>
            <person name="Kusano J."/>
            <person name="Kanehori K."/>
            <person name="Takahashi-Fujii A."/>
            <person name="Hara H."/>
            <person name="Tanase T.-O."/>
            <person name="Nomura Y."/>
            <person name="Togiya S."/>
            <person name="Komai F."/>
            <person name="Hara R."/>
            <person name="Takeuchi K."/>
            <person name="Arita M."/>
            <person name="Imose N."/>
            <person name="Musashino K."/>
            <person name="Yuuki H."/>
            <person name="Oshima A."/>
            <person name="Sasaki N."/>
            <person name="Aotsuka S."/>
            <person name="Yoshikawa Y."/>
            <person name="Matsunawa H."/>
            <person name="Ichihara T."/>
            <person name="Shiohata N."/>
            <person name="Sano S."/>
            <person name="Moriya S."/>
            <person name="Momiyama H."/>
            <person name="Satoh N."/>
            <person name="Takami S."/>
            <person name="Terashima Y."/>
            <person name="Suzuki O."/>
            <person name="Nakagawa S."/>
            <person name="Senoh A."/>
            <person name="Mizoguchi H."/>
            <person name="Goto Y."/>
            <person name="Shimizu F."/>
            <person name="Wakebe H."/>
            <person name="Hishigaki H."/>
            <person name="Watanabe T."/>
            <person name="Sugiyama A."/>
            <person name="Takemoto M."/>
            <person name="Kawakami B."/>
            <person name="Yamazaki M."/>
            <person name="Watanabe K."/>
            <person name="Kumagai A."/>
            <person name="Itakura S."/>
            <person name="Fukuzumi Y."/>
            <person name="Fujimori Y."/>
            <person name="Komiyama M."/>
            <person name="Tashiro H."/>
            <person name="Tanigami A."/>
            <person name="Fujiwara T."/>
            <person name="Ono T."/>
            <person name="Yamada K."/>
            <person name="Fujii Y."/>
            <person name="Ozaki K."/>
            <person name="Hirao M."/>
            <person name="Ohmori Y."/>
            <person name="Kawabata A."/>
            <person name="Hikiji T."/>
            <person name="Kobatake N."/>
            <person name="Inagaki H."/>
            <person name="Ikema Y."/>
            <person name="Okamoto S."/>
            <person name="Okitani R."/>
            <person name="Kawakami T."/>
            <person name="Noguchi S."/>
            <person name="Itoh T."/>
            <person name="Shigeta K."/>
            <person name="Senba T."/>
            <person name="Matsumura K."/>
            <person name="Nakajima Y."/>
            <person name="Mizuno T."/>
            <person name="Morinaga M."/>
            <person name="Sasaki M."/>
            <person name="Togashi T."/>
            <person name="Oyama M."/>
            <person name="Hata H."/>
            <person name="Watanabe M."/>
            <person name="Komatsu T."/>
            <person name="Mizushima-Sugano J."/>
            <person name="Satoh T."/>
            <person name="Shirai Y."/>
            <person name="Takahashi Y."/>
            <person name="Nakagawa K."/>
            <person name="Okumura K."/>
            <person name="Nagase T."/>
            <person name="Nomura N."/>
            <person name="Kikuchi H."/>
            <person name="Masuho Y."/>
            <person name="Yamashita R."/>
            <person name="Nakai K."/>
            <person name="Yada T."/>
            <person name="Nakamura Y."/>
            <person name="Ohara O."/>
            <person name="Isogai T."/>
            <person name="Sugano S."/>
        </authorList>
    </citation>
    <scope>NUCLEOTIDE SEQUENCE [LARGE SCALE MRNA] (ISOFORMS 1 AND 2)</scope>
    <source>
        <tissue>Cerebellum</tissue>
    </source>
</reference>
<reference key="2">
    <citation type="journal article" date="2006" name="Nature">
        <title>DNA sequence of human chromosome 17 and analysis of rearrangement in the human lineage.</title>
        <authorList>
            <person name="Zody M.C."/>
            <person name="Garber M."/>
            <person name="Adams D.J."/>
            <person name="Sharpe T."/>
            <person name="Harrow J."/>
            <person name="Lupski J.R."/>
            <person name="Nicholson C."/>
            <person name="Searle S.M."/>
            <person name="Wilming L."/>
            <person name="Young S.K."/>
            <person name="Abouelleil A."/>
            <person name="Allen N.R."/>
            <person name="Bi W."/>
            <person name="Bloom T."/>
            <person name="Borowsky M.L."/>
            <person name="Bugalter B.E."/>
            <person name="Butler J."/>
            <person name="Chang J.L."/>
            <person name="Chen C.-K."/>
            <person name="Cook A."/>
            <person name="Corum B."/>
            <person name="Cuomo C.A."/>
            <person name="de Jong P.J."/>
            <person name="DeCaprio D."/>
            <person name="Dewar K."/>
            <person name="FitzGerald M."/>
            <person name="Gilbert J."/>
            <person name="Gibson R."/>
            <person name="Gnerre S."/>
            <person name="Goldstein S."/>
            <person name="Grafham D.V."/>
            <person name="Grocock R."/>
            <person name="Hafez N."/>
            <person name="Hagopian D.S."/>
            <person name="Hart E."/>
            <person name="Norman C.H."/>
            <person name="Humphray S."/>
            <person name="Jaffe D.B."/>
            <person name="Jones M."/>
            <person name="Kamal M."/>
            <person name="Khodiyar V.K."/>
            <person name="LaButti K."/>
            <person name="Laird G."/>
            <person name="Lehoczky J."/>
            <person name="Liu X."/>
            <person name="Lokyitsang T."/>
            <person name="Loveland J."/>
            <person name="Lui A."/>
            <person name="Macdonald P."/>
            <person name="Major J.E."/>
            <person name="Matthews L."/>
            <person name="Mauceli E."/>
            <person name="McCarroll S.A."/>
            <person name="Mihalev A.H."/>
            <person name="Mudge J."/>
            <person name="Nguyen C."/>
            <person name="Nicol R."/>
            <person name="O'Leary S.B."/>
            <person name="Osoegawa K."/>
            <person name="Schwartz D.C."/>
            <person name="Shaw-Smith C."/>
            <person name="Stankiewicz P."/>
            <person name="Steward C."/>
            <person name="Swarbreck D."/>
            <person name="Venkataraman V."/>
            <person name="Whittaker C.A."/>
            <person name="Yang X."/>
            <person name="Zimmer A.R."/>
            <person name="Bradley A."/>
            <person name="Hubbard T."/>
            <person name="Birren B.W."/>
            <person name="Rogers J."/>
            <person name="Lander E.S."/>
            <person name="Nusbaum C."/>
        </authorList>
    </citation>
    <scope>NUCLEOTIDE SEQUENCE [LARGE SCALE GENOMIC DNA]</scope>
</reference>
<reference key="3">
    <citation type="journal article" date="2014" name="Neurosci. Lett.">
        <title>Altered subcellular localization of the NeuN/Rbfox3 RNA splicing factor in HIV-associated neurocognitive disorders (HAND).</title>
        <authorList>
            <person name="Lucas C.H."/>
            <person name="Calvez M."/>
            <person name="Babu R."/>
            <person name="Brown A."/>
        </authorList>
    </citation>
    <scope>SUBCELLULAR LOCATION</scope>
</reference>